<comment type="function">
    <text evidence="1">Phosphorolytic 3'-5' exoribonuclease that plays an important role in tRNA 3'-end maturation. Removes nucleotide residues following the 3'-CCA terminus of tRNAs; can also add nucleotides to the ends of RNA molecules by using nucleoside diphosphates as substrates, but this may not be physiologically important. Probably plays a role in initiation of 16S rRNA degradation (leading to ribosome degradation) during starvation.</text>
</comment>
<comment type="catalytic activity">
    <reaction evidence="1">
        <text>tRNA(n+1) + phosphate = tRNA(n) + a ribonucleoside 5'-diphosphate</text>
        <dbReference type="Rhea" id="RHEA:10628"/>
        <dbReference type="Rhea" id="RHEA-COMP:17343"/>
        <dbReference type="Rhea" id="RHEA-COMP:17344"/>
        <dbReference type="ChEBI" id="CHEBI:43474"/>
        <dbReference type="ChEBI" id="CHEBI:57930"/>
        <dbReference type="ChEBI" id="CHEBI:173114"/>
        <dbReference type="EC" id="2.7.7.56"/>
    </reaction>
</comment>
<comment type="subunit">
    <text evidence="1">Homohexameric ring arranged as a trimer of dimers.</text>
</comment>
<comment type="similarity">
    <text evidence="1">Belongs to the RNase PH family.</text>
</comment>
<feature type="chain" id="PRO_1000129376" description="Ribonuclease PH">
    <location>
        <begin position="1"/>
        <end position="245"/>
    </location>
</feature>
<feature type="binding site" evidence="1">
    <location>
        <position position="87"/>
    </location>
    <ligand>
        <name>phosphate</name>
        <dbReference type="ChEBI" id="CHEBI:43474"/>
        <note>substrate</note>
    </ligand>
</feature>
<feature type="binding site" evidence="1">
    <location>
        <begin position="125"/>
        <end position="127"/>
    </location>
    <ligand>
        <name>phosphate</name>
        <dbReference type="ChEBI" id="CHEBI:43474"/>
        <note>substrate</note>
    </ligand>
</feature>
<gene>
    <name evidence="1" type="primary">rph</name>
    <name type="ordered locus">SGR_4638</name>
</gene>
<sequence length="245" mass="26117">MSRIDGRTPEQLRPVTIERGWSKHAEGSVLISFGDTKVFCTASVTEGVPRWRKGSGEGWVTAEYSMLPRSTNTRGDREAVRGKIGGRTHEISRLIGRSLRAVIDCKALGENTIVLDCDVLQADGGTRTAAITGAYVALADAVAWAQGKKIVKAGRKPLTDTVAAISVGIVDGTPLLDLCYEEDVRAETDMNVVCTGDGRFVEVQGTAEGAPFDRKELGALLDLATAGCVDLAALQRDALVRTQDA</sequence>
<dbReference type="EC" id="2.7.7.56" evidence="1"/>
<dbReference type="EMBL" id="AP009493">
    <property type="protein sequence ID" value="BAG21467.1"/>
    <property type="molecule type" value="Genomic_DNA"/>
</dbReference>
<dbReference type="RefSeq" id="WP_012380749.1">
    <property type="nucleotide sequence ID" value="NC_010572.1"/>
</dbReference>
<dbReference type="SMR" id="B1VVV6"/>
<dbReference type="KEGG" id="sgr:SGR_4638"/>
<dbReference type="PATRIC" id="fig|455632.4.peg.4735"/>
<dbReference type="eggNOG" id="COG0689">
    <property type="taxonomic scope" value="Bacteria"/>
</dbReference>
<dbReference type="HOGENOM" id="CLU_050858_0_0_11"/>
<dbReference type="Proteomes" id="UP000001685">
    <property type="component" value="Chromosome"/>
</dbReference>
<dbReference type="GO" id="GO:0000175">
    <property type="term" value="F:3'-5'-RNA exonuclease activity"/>
    <property type="evidence" value="ECO:0007669"/>
    <property type="project" value="UniProtKB-UniRule"/>
</dbReference>
<dbReference type="GO" id="GO:0000049">
    <property type="term" value="F:tRNA binding"/>
    <property type="evidence" value="ECO:0007669"/>
    <property type="project" value="UniProtKB-UniRule"/>
</dbReference>
<dbReference type="GO" id="GO:0009022">
    <property type="term" value="F:tRNA nucleotidyltransferase activity"/>
    <property type="evidence" value="ECO:0007669"/>
    <property type="project" value="UniProtKB-UniRule"/>
</dbReference>
<dbReference type="GO" id="GO:0016075">
    <property type="term" value="P:rRNA catabolic process"/>
    <property type="evidence" value="ECO:0007669"/>
    <property type="project" value="UniProtKB-UniRule"/>
</dbReference>
<dbReference type="GO" id="GO:0006364">
    <property type="term" value="P:rRNA processing"/>
    <property type="evidence" value="ECO:0007669"/>
    <property type="project" value="UniProtKB-KW"/>
</dbReference>
<dbReference type="GO" id="GO:0008033">
    <property type="term" value="P:tRNA processing"/>
    <property type="evidence" value="ECO:0007669"/>
    <property type="project" value="UniProtKB-UniRule"/>
</dbReference>
<dbReference type="CDD" id="cd11362">
    <property type="entry name" value="RNase_PH_bact"/>
    <property type="match status" value="1"/>
</dbReference>
<dbReference type="FunFam" id="3.30.230.70:FF:000003">
    <property type="entry name" value="Ribonuclease PH"/>
    <property type="match status" value="1"/>
</dbReference>
<dbReference type="Gene3D" id="3.30.230.70">
    <property type="entry name" value="GHMP Kinase, N-terminal domain"/>
    <property type="match status" value="1"/>
</dbReference>
<dbReference type="HAMAP" id="MF_00564">
    <property type="entry name" value="RNase_PH"/>
    <property type="match status" value="1"/>
</dbReference>
<dbReference type="InterPro" id="IPR001247">
    <property type="entry name" value="ExoRNase_PH_dom1"/>
</dbReference>
<dbReference type="InterPro" id="IPR015847">
    <property type="entry name" value="ExoRNase_PH_dom2"/>
</dbReference>
<dbReference type="InterPro" id="IPR036345">
    <property type="entry name" value="ExoRNase_PH_dom2_sf"/>
</dbReference>
<dbReference type="InterPro" id="IPR027408">
    <property type="entry name" value="PNPase/RNase_PH_dom_sf"/>
</dbReference>
<dbReference type="InterPro" id="IPR020568">
    <property type="entry name" value="Ribosomal_Su5_D2-typ_SF"/>
</dbReference>
<dbReference type="InterPro" id="IPR050080">
    <property type="entry name" value="RNase_PH"/>
</dbReference>
<dbReference type="InterPro" id="IPR002381">
    <property type="entry name" value="RNase_PH_bac-type"/>
</dbReference>
<dbReference type="InterPro" id="IPR018336">
    <property type="entry name" value="RNase_PH_CS"/>
</dbReference>
<dbReference type="NCBIfam" id="TIGR01966">
    <property type="entry name" value="RNasePH"/>
    <property type="match status" value="1"/>
</dbReference>
<dbReference type="PANTHER" id="PTHR11953">
    <property type="entry name" value="EXOSOME COMPLEX COMPONENT"/>
    <property type="match status" value="1"/>
</dbReference>
<dbReference type="PANTHER" id="PTHR11953:SF0">
    <property type="entry name" value="EXOSOME COMPLEX COMPONENT RRP41"/>
    <property type="match status" value="1"/>
</dbReference>
<dbReference type="Pfam" id="PF01138">
    <property type="entry name" value="RNase_PH"/>
    <property type="match status" value="1"/>
</dbReference>
<dbReference type="Pfam" id="PF03725">
    <property type="entry name" value="RNase_PH_C"/>
    <property type="match status" value="1"/>
</dbReference>
<dbReference type="SUPFAM" id="SSF55666">
    <property type="entry name" value="Ribonuclease PH domain 2-like"/>
    <property type="match status" value="1"/>
</dbReference>
<dbReference type="SUPFAM" id="SSF54211">
    <property type="entry name" value="Ribosomal protein S5 domain 2-like"/>
    <property type="match status" value="1"/>
</dbReference>
<dbReference type="PROSITE" id="PS01277">
    <property type="entry name" value="RIBONUCLEASE_PH"/>
    <property type="match status" value="1"/>
</dbReference>
<evidence type="ECO:0000255" key="1">
    <source>
        <dbReference type="HAMAP-Rule" id="MF_00564"/>
    </source>
</evidence>
<keyword id="KW-0548">Nucleotidyltransferase</keyword>
<keyword id="KW-0694">RNA-binding</keyword>
<keyword id="KW-0698">rRNA processing</keyword>
<keyword id="KW-0808">Transferase</keyword>
<keyword id="KW-0819">tRNA processing</keyword>
<keyword id="KW-0820">tRNA-binding</keyword>
<protein>
    <recommendedName>
        <fullName evidence="1">Ribonuclease PH</fullName>
        <shortName evidence="1">RNase PH</shortName>
        <ecNumber evidence="1">2.7.7.56</ecNumber>
    </recommendedName>
    <alternativeName>
        <fullName evidence="1">tRNA nucleotidyltransferase</fullName>
    </alternativeName>
</protein>
<name>RNPH_STRGG</name>
<reference key="1">
    <citation type="journal article" date="2008" name="J. Bacteriol.">
        <title>Genome sequence of the streptomycin-producing microorganism Streptomyces griseus IFO 13350.</title>
        <authorList>
            <person name="Ohnishi Y."/>
            <person name="Ishikawa J."/>
            <person name="Hara H."/>
            <person name="Suzuki H."/>
            <person name="Ikenoya M."/>
            <person name="Ikeda H."/>
            <person name="Yamashita A."/>
            <person name="Hattori M."/>
            <person name="Horinouchi S."/>
        </authorList>
    </citation>
    <scope>NUCLEOTIDE SEQUENCE [LARGE SCALE GENOMIC DNA]</scope>
    <source>
        <strain>JCM 4626 / CBS 651.72 / NBRC 13350 / KCC S-0626 / ISP 5235</strain>
    </source>
</reference>
<proteinExistence type="inferred from homology"/>
<organism>
    <name type="scientific">Streptomyces griseus subsp. griseus (strain JCM 4626 / CBS 651.72 / NBRC 13350 / KCC S-0626 / ISP 5235)</name>
    <dbReference type="NCBI Taxonomy" id="455632"/>
    <lineage>
        <taxon>Bacteria</taxon>
        <taxon>Bacillati</taxon>
        <taxon>Actinomycetota</taxon>
        <taxon>Actinomycetes</taxon>
        <taxon>Kitasatosporales</taxon>
        <taxon>Streptomycetaceae</taxon>
        <taxon>Streptomyces</taxon>
    </lineage>
</organism>
<accession>B1VVV6</accession>